<evidence type="ECO:0000250" key="1"/>
<evidence type="ECO:0000255" key="2"/>
<evidence type="ECO:0000269" key="3">
    <source>
    </source>
</evidence>
<evidence type="ECO:0000303" key="4">
    <source>
    </source>
</evidence>
<evidence type="ECO:0000303" key="5">
    <source>
    </source>
</evidence>
<evidence type="ECO:0000305" key="6"/>
<evidence type="ECO:0000312" key="7">
    <source>
        <dbReference type="Araport" id="AT1G71866"/>
    </source>
</evidence>
<gene>
    <name evidence="4" type="primary">EPFL7</name>
    <name evidence="7" type="ordered locus">At1g71866</name>
    <name type="ORF">F14O23</name>
    <name type="ORF">F17M19</name>
</gene>
<organism>
    <name type="scientific">Arabidopsis thaliana</name>
    <name type="common">Mouse-ear cress</name>
    <dbReference type="NCBI Taxonomy" id="3702"/>
    <lineage>
        <taxon>Eukaryota</taxon>
        <taxon>Viridiplantae</taxon>
        <taxon>Streptophyta</taxon>
        <taxon>Embryophyta</taxon>
        <taxon>Tracheophyta</taxon>
        <taxon>Spermatophyta</taxon>
        <taxon>Magnoliopsida</taxon>
        <taxon>eudicotyledons</taxon>
        <taxon>Gunneridae</taxon>
        <taxon>Pentapetalae</taxon>
        <taxon>rosids</taxon>
        <taxon>malvids</taxon>
        <taxon>Brassicales</taxon>
        <taxon>Brassicaceae</taxon>
        <taxon>Camelineae</taxon>
        <taxon>Arabidopsis</taxon>
    </lineage>
</organism>
<accession>C4B8C5</accession>
<proteinExistence type="evidence at protein level"/>
<reference key="1">
    <citation type="journal article" date="2000" name="Nature">
        <title>Sequence and analysis of chromosome 1 of the plant Arabidopsis thaliana.</title>
        <authorList>
            <person name="Theologis A."/>
            <person name="Ecker J.R."/>
            <person name="Palm C.J."/>
            <person name="Federspiel N.A."/>
            <person name="Kaul S."/>
            <person name="White O."/>
            <person name="Alonso J."/>
            <person name="Altafi H."/>
            <person name="Araujo R."/>
            <person name="Bowman C.L."/>
            <person name="Brooks S.Y."/>
            <person name="Buehler E."/>
            <person name="Chan A."/>
            <person name="Chao Q."/>
            <person name="Chen H."/>
            <person name="Cheuk R.F."/>
            <person name="Chin C.W."/>
            <person name="Chung M.K."/>
            <person name="Conn L."/>
            <person name="Conway A.B."/>
            <person name="Conway A.R."/>
            <person name="Creasy T.H."/>
            <person name="Dewar K."/>
            <person name="Dunn P."/>
            <person name="Etgu P."/>
            <person name="Feldblyum T.V."/>
            <person name="Feng J.-D."/>
            <person name="Fong B."/>
            <person name="Fujii C.Y."/>
            <person name="Gill J.E."/>
            <person name="Goldsmith A.D."/>
            <person name="Haas B."/>
            <person name="Hansen N.F."/>
            <person name="Hughes B."/>
            <person name="Huizar L."/>
            <person name="Hunter J.L."/>
            <person name="Jenkins J."/>
            <person name="Johnson-Hopson C."/>
            <person name="Khan S."/>
            <person name="Khaykin E."/>
            <person name="Kim C.J."/>
            <person name="Koo H.L."/>
            <person name="Kremenetskaia I."/>
            <person name="Kurtz D.B."/>
            <person name="Kwan A."/>
            <person name="Lam B."/>
            <person name="Langin-Hooper S."/>
            <person name="Lee A."/>
            <person name="Lee J.M."/>
            <person name="Lenz C.A."/>
            <person name="Li J.H."/>
            <person name="Li Y.-P."/>
            <person name="Lin X."/>
            <person name="Liu S.X."/>
            <person name="Liu Z.A."/>
            <person name="Luros J.S."/>
            <person name="Maiti R."/>
            <person name="Marziali A."/>
            <person name="Militscher J."/>
            <person name="Miranda M."/>
            <person name="Nguyen M."/>
            <person name="Nierman W.C."/>
            <person name="Osborne B.I."/>
            <person name="Pai G."/>
            <person name="Peterson J."/>
            <person name="Pham P.K."/>
            <person name="Rizzo M."/>
            <person name="Rooney T."/>
            <person name="Rowley D."/>
            <person name="Sakano H."/>
            <person name="Salzberg S.L."/>
            <person name="Schwartz J.R."/>
            <person name="Shinn P."/>
            <person name="Southwick A.M."/>
            <person name="Sun H."/>
            <person name="Tallon L.J."/>
            <person name="Tambunga G."/>
            <person name="Toriumi M.J."/>
            <person name="Town C.D."/>
            <person name="Utterback T."/>
            <person name="Van Aken S."/>
            <person name="Vaysberg M."/>
            <person name="Vysotskaia V.S."/>
            <person name="Walker M."/>
            <person name="Wu D."/>
            <person name="Yu G."/>
            <person name="Fraser C.M."/>
            <person name="Venter J.C."/>
            <person name="Davis R.W."/>
        </authorList>
    </citation>
    <scope>NUCLEOTIDE SEQUENCE [LARGE SCALE GENOMIC DNA]</scope>
    <source>
        <strain>cv. Columbia</strain>
    </source>
</reference>
<reference key="2">
    <citation type="journal article" date="2017" name="Plant J.">
        <title>Araport11: a complete reannotation of the Arabidopsis thaliana reference genome.</title>
        <authorList>
            <person name="Cheng C.Y."/>
            <person name="Krishnakumar V."/>
            <person name="Chan A.P."/>
            <person name="Thibaud-Nissen F."/>
            <person name="Schobel S."/>
            <person name="Town C.D."/>
        </authorList>
    </citation>
    <scope>GENOME REANNOTATION</scope>
    <source>
        <strain>cv. Columbia</strain>
    </source>
</reference>
<reference key="3">
    <citation type="journal article" date="2009" name="Plant Cell Physiol.">
        <title>Epidermal cell density is autoregulated via a secretory peptide, EPIDERMAL PATTERNING FACTOR 2 in Arabidopsis leaves.</title>
        <authorList>
            <person name="Hara K."/>
            <person name="Yokoo T."/>
            <person name="Kajita R."/>
            <person name="Onishi T."/>
            <person name="Yahata S."/>
            <person name="Peterson K.M."/>
            <person name="Torii K.U."/>
            <person name="Kakimoto T."/>
        </authorList>
    </citation>
    <scope>GENE FAMILY</scope>
    <scope>NOMENCLATURE</scope>
</reference>
<reference key="4">
    <citation type="journal article" date="2011" name="Nat. Commun.">
        <title>The NMR structure of stomagen reveals the basis of stomatal density regulation by plant peptide hormones.</title>
        <authorList>
            <person name="Ohki S."/>
            <person name="Takeuchi M."/>
            <person name="Mori M."/>
        </authorList>
    </citation>
    <scope>3D-STRUCTURE MODELING</scope>
    <scope>DISULFIDE BOND</scope>
</reference>
<comment type="function">
    <text evidence="1">Controls stomatal patterning.</text>
</comment>
<comment type="subcellular location">
    <subcellularLocation>
        <location evidence="6">Secreted</location>
    </subcellularLocation>
</comment>
<comment type="similarity">
    <text evidence="6">Belongs to the plant cysteine rich small secretory peptide family. Epidermal patterning factor subfamily.</text>
</comment>
<protein>
    <recommendedName>
        <fullName evidence="4">EPIDERMAL PATTERNING FACTOR-like protein 7</fullName>
        <shortName>EPF-like protein 7</shortName>
    </recommendedName>
    <component>
        <recommendedName>
            <fullName evidence="6">MEPFL7</fullName>
        </recommendedName>
    </component>
</protein>
<keyword id="KW-0217">Developmental protein</keyword>
<keyword id="KW-1015">Disulfide bond</keyword>
<keyword id="KW-1185">Reference proteome</keyword>
<keyword id="KW-0964">Secreted</keyword>
<keyword id="KW-0732">Signal</keyword>
<sequence>MDHVNPTLFHLKSLSIFTLTLLYISSPHFLLFKTLSMYENLRIFLKIIPFNLFGMKSVSLIAILLLHLFVSSDTFQLDLFHCKYYLAITWLINRDNECVIYILVGSFICCIVICEVVDKASGSSIPDCSNACGPCKPCKLVVISSTCSASEACPLVYKCLCKGKYYHVPSLT</sequence>
<name>EPFL7_ARATH</name>
<feature type="signal peptide" evidence="2">
    <location>
        <begin position="1"/>
        <end position="27"/>
    </location>
</feature>
<feature type="chain" id="PRO_0000392505" description="EPIDERMAL PATTERNING FACTOR-like protein 7">
    <location>
        <begin position="28"/>
        <end position="172"/>
    </location>
</feature>
<feature type="chain" id="PRO_0000430513" description="MEPFL7" evidence="5">
    <location>
        <begin position="121"/>
        <end position="172"/>
    </location>
</feature>
<feature type="disulfide bond" evidence="5">
    <location>
        <begin position="128"/>
        <end position="159"/>
    </location>
</feature>
<feature type="disulfide bond" evidence="5">
    <location>
        <begin position="132"/>
        <end position="138"/>
    </location>
</feature>
<feature type="disulfide bond" evidence="5">
    <location>
        <begin position="135"/>
        <end position="161"/>
    </location>
</feature>
<feature type="disulfide bond" evidence="3">
    <location>
        <begin position="147"/>
        <end position="153"/>
    </location>
</feature>
<dbReference type="EMBL" id="AC012654">
    <property type="status" value="NOT_ANNOTATED_CDS"/>
    <property type="molecule type" value="Genomic_DNA"/>
</dbReference>
<dbReference type="EMBL" id="AC021665">
    <property type="status" value="NOT_ANNOTATED_CDS"/>
    <property type="molecule type" value="Genomic_DNA"/>
</dbReference>
<dbReference type="EMBL" id="CP002684">
    <property type="protein sequence ID" value="AEE35245.1"/>
    <property type="molecule type" value="Genomic_DNA"/>
</dbReference>
<dbReference type="EMBL" id="AB499313">
    <property type="protein sequence ID" value="BAH58783.1"/>
    <property type="molecule type" value="mRNA"/>
</dbReference>
<dbReference type="RefSeq" id="NP_001185375.1">
    <property type="nucleotide sequence ID" value="NM_001198446.1"/>
</dbReference>
<dbReference type="SMR" id="C4B8C5"/>
<dbReference type="STRING" id="3702.C4B8C5"/>
<dbReference type="PaxDb" id="3702-AT1G71866.1"/>
<dbReference type="EnsemblPlants" id="AT1G71866.1">
    <property type="protein sequence ID" value="AT1G71866.1"/>
    <property type="gene ID" value="AT1G71866"/>
</dbReference>
<dbReference type="GeneID" id="10723086"/>
<dbReference type="Gramene" id="AT1G71866.1">
    <property type="protein sequence ID" value="AT1G71866.1"/>
    <property type="gene ID" value="AT1G71866"/>
</dbReference>
<dbReference type="KEGG" id="ath:AT1G71866"/>
<dbReference type="Araport" id="AT1G71866"/>
<dbReference type="TAIR" id="AT1G71866">
    <property type="gene designation" value="EPFL7"/>
</dbReference>
<dbReference type="HOGENOM" id="CLU_1557393_0_0_1"/>
<dbReference type="InParanoid" id="C4B8C5"/>
<dbReference type="PRO" id="PR:C4B8C5"/>
<dbReference type="Proteomes" id="UP000006548">
    <property type="component" value="Chromosome 1"/>
</dbReference>
<dbReference type="ExpressionAtlas" id="C4B8C5">
    <property type="expression patterns" value="baseline and differential"/>
</dbReference>
<dbReference type="GO" id="GO:0005576">
    <property type="term" value="C:extracellular region"/>
    <property type="evidence" value="ECO:0007669"/>
    <property type="project" value="UniProtKB-SubCell"/>
</dbReference>
<dbReference type="GO" id="GO:0010052">
    <property type="term" value="P:guard cell differentiation"/>
    <property type="evidence" value="ECO:0000250"/>
    <property type="project" value="UniProtKB"/>
</dbReference>
<dbReference type="GO" id="GO:0010374">
    <property type="term" value="P:stomatal complex development"/>
    <property type="evidence" value="ECO:0000250"/>
    <property type="project" value="UniProtKB"/>
</dbReference>
<dbReference type="Pfam" id="PF17181">
    <property type="entry name" value="EPF"/>
    <property type="match status" value="1"/>
</dbReference>